<name>NADM_CALMQ</name>
<accession>A8M9Z9</accession>
<feature type="chain" id="PRO_1000078369" description="Nicotinamide-nucleotide adenylyltransferase">
    <location>
        <begin position="1"/>
        <end position="178"/>
    </location>
</feature>
<comment type="catalytic activity">
    <reaction evidence="1">
        <text>beta-nicotinamide D-ribonucleotide + ATP + H(+) = diphosphate + NAD(+)</text>
        <dbReference type="Rhea" id="RHEA:21360"/>
        <dbReference type="ChEBI" id="CHEBI:14649"/>
        <dbReference type="ChEBI" id="CHEBI:15378"/>
        <dbReference type="ChEBI" id="CHEBI:30616"/>
        <dbReference type="ChEBI" id="CHEBI:33019"/>
        <dbReference type="ChEBI" id="CHEBI:57540"/>
        <dbReference type="EC" id="2.7.7.1"/>
    </reaction>
</comment>
<comment type="pathway">
    <text evidence="1">Cofactor biosynthesis; NAD(+) biosynthesis; NAD(+) from nicotinamide D-ribonucleotide: step 1/1.</text>
</comment>
<comment type="subcellular location">
    <subcellularLocation>
        <location evidence="1">Cytoplasm</location>
    </subcellularLocation>
</comment>
<comment type="similarity">
    <text evidence="1">Belongs to the archaeal NMN adenylyltransferase family.</text>
</comment>
<proteinExistence type="inferred from homology"/>
<sequence>MVRGLFIGRFQPPHWGHVWAIKAILSEVDEVIIVLGSAQFNYIEKDPFTVGERIWMLREGLREGGVDLSRVIIVPVPNIENNAAWLSHIKSYLPPFQVAYTGNPFVAMLLKEGGVEVRQQPIFDRGKYVSTRIREMMIKGDSTWRELVPNSVARIIDEVKGVERLRVIITGEAEPHRW</sequence>
<evidence type="ECO:0000255" key="1">
    <source>
        <dbReference type="HAMAP-Rule" id="MF_00243"/>
    </source>
</evidence>
<organism>
    <name type="scientific">Caldivirga maquilingensis (strain ATCC 700844 / DSM 13496 / JCM 10307 / IC-167)</name>
    <dbReference type="NCBI Taxonomy" id="397948"/>
    <lineage>
        <taxon>Archaea</taxon>
        <taxon>Thermoproteota</taxon>
        <taxon>Thermoprotei</taxon>
        <taxon>Thermoproteales</taxon>
        <taxon>Thermoproteaceae</taxon>
        <taxon>Caldivirga</taxon>
    </lineage>
</organism>
<protein>
    <recommendedName>
        <fullName evidence="1">Nicotinamide-nucleotide adenylyltransferase</fullName>
        <ecNumber evidence="1">2.7.7.1</ecNumber>
    </recommendedName>
    <alternativeName>
        <fullName evidence="1">NAD(+) diphosphorylase</fullName>
    </alternativeName>
    <alternativeName>
        <fullName evidence="1">NAD(+) pyrophosphorylase</fullName>
    </alternativeName>
    <alternativeName>
        <fullName evidence="1">NMN adenylyltransferase</fullName>
    </alternativeName>
</protein>
<keyword id="KW-0067">ATP-binding</keyword>
<keyword id="KW-0963">Cytoplasm</keyword>
<keyword id="KW-0520">NAD</keyword>
<keyword id="KW-0547">Nucleotide-binding</keyword>
<keyword id="KW-0548">Nucleotidyltransferase</keyword>
<keyword id="KW-0662">Pyridine nucleotide biosynthesis</keyword>
<keyword id="KW-1185">Reference proteome</keyword>
<keyword id="KW-0808">Transferase</keyword>
<reference key="1">
    <citation type="submission" date="2007-10" db="EMBL/GenBank/DDBJ databases">
        <title>Complete sequence of Caldivirga maquilingensis IC-167.</title>
        <authorList>
            <consortium name="US DOE Joint Genome Institute"/>
            <person name="Copeland A."/>
            <person name="Lucas S."/>
            <person name="Lapidus A."/>
            <person name="Barry K."/>
            <person name="Glavina del Rio T."/>
            <person name="Dalin E."/>
            <person name="Tice H."/>
            <person name="Pitluck S."/>
            <person name="Saunders E."/>
            <person name="Brettin T."/>
            <person name="Bruce D."/>
            <person name="Detter J.C."/>
            <person name="Han C."/>
            <person name="Schmutz J."/>
            <person name="Larimer F."/>
            <person name="Land M."/>
            <person name="Hauser L."/>
            <person name="Kyrpides N."/>
            <person name="Ivanova N."/>
            <person name="Biddle J.F."/>
            <person name="Zhang Z."/>
            <person name="Fitz-Gibbon S.T."/>
            <person name="Lowe T.M."/>
            <person name="Saltikov C."/>
            <person name="House C.H."/>
            <person name="Richardson P."/>
        </authorList>
    </citation>
    <scope>NUCLEOTIDE SEQUENCE [LARGE SCALE GENOMIC DNA]</scope>
    <source>
        <strain>ATCC 700844 / DSM 13496 / JCM 10307 / IC-167</strain>
    </source>
</reference>
<dbReference type="EC" id="2.7.7.1" evidence="1"/>
<dbReference type="EMBL" id="CP000852">
    <property type="protein sequence ID" value="ABW02470.1"/>
    <property type="molecule type" value="Genomic_DNA"/>
</dbReference>
<dbReference type="RefSeq" id="WP_012186689.1">
    <property type="nucleotide sequence ID" value="NC_009954.1"/>
</dbReference>
<dbReference type="SMR" id="A8M9Z9"/>
<dbReference type="STRING" id="397948.Cmaq_1647"/>
<dbReference type="GeneID" id="5709546"/>
<dbReference type="KEGG" id="cma:Cmaq_1647"/>
<dbReference type="eggNOG" id="arCOG00972">
    <property type="taxonomic scope" value="Archaea"/>
</dbReference>
<dbReference type="HOGENOM" id="CLU_108783_0_0_2"/>
<dbReference type="OrthoDB" id="264480at2157"/>
<dbReference type="UniPathway" id="UPA00253">
    <property type="reaction ID" value="UER00600"/>
</dbReference>
<dbReference type="Proteomes" id="UP000001137">
    <property type="component" value="Chromosome"/>
</dbReference>
<dbReference type="GO" id="GO:0005737">
    <property type="term" value="C:cytoplasm"/>
    <property type="evidence" value="ECO:0007669"/>
    <property type="project" value="UniProtKB-SubCell"/>
</dbReference>
<dbReference type="GO" id="GO:0005524">
    <property type="term" value="F:ATP binding"/>
    <property type="evidence" value="ECO:0007669"/>
    <property type="project" value="UniProtKB-KW"/>
</dbReference>
<dbReference type="GO" id="GO:0000309">
    <property type="term" value="F:nicotinamide-nucleotide adenylyltransferase activity"/>
    <property type="evidence" value="ECO:0007669"/>
    <property type="project" value="UniProtKB-UniRule"/>
</dbReference>
<dbReference type="GO" id="GO:0009435">
    <property type="term" value="P:NAD biosynthetic process"/>
    <property type="evidence" value="ECO:0007669"/>
    <property type="project" value="UniProtKB-UniRule"/>
</dbReference>
<dbReference type="Gene3D" id="3.40.50.620">
    <property type="entry name" value="HUPs"/>
    <property type="match status" value="1"/>
</dbReference>
<dbReference type="HAMAP" id="MF_00243">
    <property type="entry name" value="NMN_adenylyltr"/>
    <property type="match status" value="1"/>
</dbReference>
<dbReference type="InterPro" id="IPR004821">
    <property type="entry name" value="Cyt_trans-like"/>
</dbReference>
<dbReference type="InterPro" id="IPR006418">
    <property type="entry name" value="NMN_Atrans_arc"/>
</dbReference>
<dbReference type="InterPro" id="IPR014729">
    <property type="entry name" value="Rossmann-like_a/b/a_fold"/>
</dbReference>
<dbReference type="NCBIfam" id="TIGR01527">
    <property type="entry name" value="arch_NMN_Atrans"/>
    <property type="match status" value="1"/>
</dbReference>
<dbReference type="NCBIfam" id="TIGR00125">
    <property type="entry name" value="cyt_tran_rel"/>
    <property type="match status" value="1"/>
</dbReference>
<dbReference type="NCBIfam" id="NF002243">
    <property type="entry name" value="PRK01153.1"/>
    <property type="match status" value="1"/>
</dbReference>
<dbReference type="PANTHER" id="PTHR21342:SF0">
    <property type="entry name" value="BIFUNCTIONAL NMN ADENYLYLTRANSFERASE_NUDIX HYDROLASE"/>
    <property type="match status" value="1"/>
</dbReference>
<dbReference type="PANTHER" id="PTHR21342">
    <property type="entry name" value="PHOSPHOPANTETHEINE ADENYLYLTRANSFERASE"/>
    <property type="match status" value="1"/>
</dbReference>
<dbReference type="Pfam" id="PF01467">
    <property type="entry name" value="CTP_transf_like"/>
    <property type="match status" value="1"/>
</dbReference>
<dbReference type="SUPFAM" id="SSF52374">
    <property type="entry name" value="Nucleotidylyl transferase"/>
    <property type="match status" value="1"/>
</dbReference>
<gene>
    <name type="ordered locus">Cmaq_1647</name>
</gene>